<feature type="chain" id="PRO_0000381369" description="Biotin synthase">
    <location>
        <begin position="1"/>
        <end position="346"/>
    </location>
</feature>
<feature type="domain" description="Radical SAM core" evidence="2">
    <location>
        <begin position="38"/>
        <end position="256"/>
    </location>
</feature>
<feature type="binding site" evidence="1">
    <location>
        <position position="53"/>
    </location>
    <ligand>
        <name>[4Fe-4S] cluster</name>
        <dbReference type="ChEBI" id="CHEBI:49883"/>
        <note>4Fe-4S-S-AdoMet</note>
    </ligand>
</feature>
<feature type="binding site" evidence="1">
    <location>
        <position position="57"/>
    </location>
    <ligand>
        <name>[4Fe-4S] cluster</name>
        <dbReference type="ChEBI" id="CHEBI:49883"/>
        <note>4Fe-4S-S-AdoMet</note>
    </ligand>
</feature>
<feature type="binding site" evidence="1">
    <location>
        <position position="60"/>
    </location>
    <ligand>
        <name>[4Fe-4S] cluster</name>
        <dbReference type="ChEBI" id="CHEBI:49883"/>
        <note>4Fe-4S-S-AdoMet</note>
    </ligand>
</feature>
<feature type="binding site" evidence="1">
    <location>
        <position position="97"/>
    </location>
    <ligand>
        <name>[2Fe-2S] cluster</name>
        <dbReference type="ChEBI" id="CHEBI:190135"/>
    </ligand>
</feature>
<feature type="binding site" evidence="1">
    <location>
        <position position="128"/>
    </location>
    <ligand>
        <name>[2Fe-2S] cluster</name>
        <dbReference type="ChEBI" id="CHEBI:190135"/>
    </ligand>
</feature>
<feature type="binding site" evidence="1">
    <location>
        <position position="188"/>
    </location>
    <ligand>
        <name>[2Fe-2S] cluster</name>
        <dbReference type="ChEBI" id="CHEBI:190135"/>
    </ligand>
</feature>
<feature type="binding site" evidence="1">
    <location>
        <position position="260"/>
    </location>
    <ligand>
        <name>[2Fe-2S] cluster</name>
        <dbReference type="ChEBI" id="CHEBI:190135"/>
    </ligand>
</feature>
<accession>B1IXJ3</accession>
<organism>
    <name type="scientific">Escherichia coli (strain ATCC 8739 / DSM 1576 / NBRC 3972 / NCIMB 8545 / WDCM 00012 / Crooks)</name>
    <dbReference type="NCBI Taxonomy" id="481805"/>
    <lineage>
        <taxon>Bacteria</taxon>
        <taxon>Pseudomonadati</taxon>
        <taxon>Pseudomonadota</taxon>
        <taxon>Gammaproteobacteria</taxon>
        <taxon>Enterobacterales</taxon>
        <taxon>Enterobacteriaceae</taxon>
        <taxon>Escherichia</taxon>
    </lineage>
</organism>
<protein>
    <recommendedName>
        <fullName evidence="1">Biotin synthase</fullName>
        <ecNumber evidence="1">2.8.1.6</ecNumber>
    </recommendedName>
</protein>
<keyword id="KW-0001">2Fe-2S</keyword>
<keyword id="KW-0004">4Fe-4S</keyword>
<keyword id="KW-0093">Biotin biosynthesis</keyword>
<keyword id="KW-0408">Iron</keyword>
<keyword id="KW-0411">Iron-sulfur</keyword>
<keyword id="KW-0479">Metal-binding</keyword>
<keyword id="KW-0949">S-adenosyl-L-methionine</keyword>
<keyword id="KW-0808">Transferase</keyword>
<sequence>MAHRPRWTLSQVTELFEKPLLDLLFEAQQVHRQHFDPRQVQVSTLLSIKTGACPEDCKYCPQSSRYKTGLEAERLMEVEQVLESARKAKAAGSTRFCMGAAWKNPHERDMPYLEQMVQGVKAMGLEACMTLGTLSESQAQRLANAGLDYYNHNLDTSPEFYGNIITTRTYQERLDTLEKVRDAGIKVCSGGIVGLGETVKDRAGLLLQLANLPTPPESVPINMLVKVKGTPLADNDDVDAFDFIRTIAVARIMMPTSYVRLSAGREQMNEQTQAMCFMAGANSIFYGCKLLTTPNPEEDKDLQLFRKLGLNPQQTAVLAGDNEQQQRLEQALMTPDTDEYYNAAAL</sequence>
<gene>
    <name evidence="1" type="primary">bioB</name>
    <name type="ordered locus">EcolC_2868</name>
</gene>
<dbReference type="EC" id="2.8.1.6" evidence="1"/>
<dbReference type="EMBL" id="CP000946">
    <property type="protein sequence ID" value="ACA78496.1"/>
    <property type="molecule type" value="Genomic_DNA"/>
</dbReference>
<dbReference type="RefSeq" id="WP_000951213.1">
    <property type="nucleotide sequence ID" value="NZ_MTFT01000003.1"/>
</dbReference>
<dbReference type="SMR" id="B1IXJ3"/>
<dbReference type="GeneID" id="93776655"/>
<dbReference type="KEGG" id="ecl:EcolC_2868"/>
<dbReference type="HOGENOM" id="CLU_033172_1_2_6"/>
<dbReference type="UniPathway" id="UPA00078">
    <property type="reaction ID" value="UER00162"/>
</dbReference>
<dbReference type="GO" id="GO:0051537">
    <property type="term" value="F:2 iron, 2 sulfur cluster binding"/>
    <property type="evidence" value="ECO:0007669"/>
    <property type="project" value="UniProtKB-KW"/>
</dbReference>
<dbReference type="GO" id="GO:0051539">
    <property type="term" value="F:4 iron, 4 sulfur cluster binding"/>
    <property type="evidence" value="ECO:0007669"/>
    <property type="project" value="UniProtKB-KW"/>
</dbReference>
<dbReference type="GO" id="GO:0004076">
    <property type="term" value="F:biotin synthase activity"/>
    <property type="evidence" value="ECO:0007669"/>
    <property type="project" value="UniProtKB-UniRule"/>
</dbReference>
<dbReference type="GO" id="GO:0005506">
    <property type="term" value="F:iron ion binding"/>
    <property type="evidence" value="ECO:0007669"/>
    <property type="project" value="UniProtKB-UniRule"/>
</dbReference>
<dbReference type="GO" id="GO:0009102">
    <property type="term" value="P:biotin biosynthetic process"/>
    <property type="evidence" value="ECO:0007669"/>
    <property type="project" value="UniProtKB-UniRule"/>
</dbReference>
<dbReference type="CDD" id="cd01335">
    <property type="entry name" value="Radical_SAM"/>
    <property type="match status" value="1"/>
</dbReference>
<dbReference type="FunFam" id="3.20.20.70:FF:000011">
    <property type="entry name" value="Biotin synthase"/>
    <property type="match status" value="1"/>
</dbReference>
<dbReference type="Gene3D" id="3.20.20.70">
    <property type="entry name" value="Aldolase class I"/>
    <property type="match status" value="1"/>
</dbReference>
<dbReference type="HAMAP" id="MF_01694">
    <property type="entry name" value="BioB"/>
    <property type="match status" value="1"/>
</dbReference>
<dbReference type="InterPro" id="IPR013785">
    <property type="entry name" value="Aldolase_TIM"/>
</dbReference>
<dbReference type="InterPro" id="IPR010722">
    <property type="entry name" value="BATS_dom"/>
</dbReference>
<dbReference type="InterPro" id="IPR002684">
    <property type="entry name" value="Biotin_synth/BioAB"/>
</dbReference>
<dbReference type="InterPro" id="IPR024177">
    <property type="entry name" value="Biotin_synthase"/>
</dbReference>
<dbReference type="InterPro" id="IPR006638">
    <property type="entry name" value="Elp3/MiaA/NifB-like_rSAM"/>
</dbReference>
<dbReference type="InterPro" id="IPR007197">
    <property type="entry name" value="rSAM"/>
</dbReference>
<dbReference type="NCBIfam" id="TIGR00433">
    <property type="entry name" value="bioB"/>
    <property type="match status" value="1"/>
</dbReference>
<dbReference type="PANTHER" id="PTHR22976">
    <property type="entry name" value="BIOTIN SYNTHASE"/>
    <property type="match status" value="1"/>
</dbReference>
<dbReference type="PANTHER" id="PTHR22976:SF2">
    <property type="entry name" value="BIOTIN SYNTHASE, MITOCHONDRIAL"/>
    <property type="match status" value="1"/>
</dbReference>
<dbReference type="Pfam" id="PF06968">
    <property type="entry name" value="BATS"/>
    <property type="match status" value="1"/>
</dbReference>
<dbReference type="Pfam" id="PF04055">
    <property type="entry name" value="Radical_SAM"/>
    <property type="match status" value="1"/>
</dbReference>
<dbReference type="PIRSF" id="PIRSF001619">
    <property type="entry name" value="Biotin_synth"/>
    <property type="match status" value="1"/>
</dbReference>
<dbReference type="SFLD" id="SFLDG01060">
    <property type="entry name" value="BATS_domain_containing"/>
    <property type="match status" value="1"/>
</dbReference>
<dbReference type="SFLD" id="SFLDF00272">
    <property type="entry name" value="biotin_synthase"/>
    <property type="match status" value="1"/>
</dbReference>
<dbReference type="SMART" id="SM00876">
    <property type="entry name" value="BATS"/>
    <property type="match status" value="1"/>
</dbReference>
<dbReference type="SMART" id="SM00729">
    <property type="entry name" value="Elp3"/>
    <property type="match status" value="1"/>
</dbReference>
<dbReference type="SUPFAM" id="SSF102114">
    <property type="entry name" value="Radical SAM enzymes"/>
    <property type="match status" value="1"/>
</dbReference>
<dbReference type="PROSITE" id="PS51918">
    <property type="entry name" value="RADICAL_SAM"/>
    <property type="match status" value="1"/>
</dbReference>
<name>BIOB_ECOLC</name>
<proteinExistence type="inferred from homology"/>
<comment type="function">
    <text evidence="1">Catalyzes the conversion of dethiobiotin (DTB) to biotin by the insertion of a sulfur atom into dethiobiotin via a radical-based mechanism.</text>
</comment>
<comment type="catalytic activity">
    <reaction evidence="1">
        <text>(4R,5S)-dethiobiotin + (sulfur carrier)-SH + 2 reduced [2Fe-2S]-[ferredoxin] + 2 S-adenosyl-L-methionine = (sulfur carrier)-H + biotin + 2 5'-deoxyadenosine + 2 L-methionine + 2 oxidized [2Fe-2S]-[ferredoxin]</text>
        <dbReference type="Rhea" id="RHEA:22060"/>
        <dbReference type="Rhea" id="RHEA-COMP:10000"/>
        <dbReference type="Rhea" id="RHEA-COMP:10001"/>
        <dbReference type="Rhea" id="RHEA-COMP:14737"/>
        <dbReference type="Rhea" id="RHEA-COMP:14739"/>
        <dbReference type="ChEBI" id="CHEBI:17319"/>
        <dbReference type="ChEBI" id="CHEBI:29917"/>
        <dbReference type="ChEBI" id="CHEBI:33737"/>
        <dbReference type="ChEBI" id="CHEBI:33738"/>
        <dbReference type="ChEBI" id="CHEBI:57586"/>
        <dbReference type="ChEBI" id="CHEBI:57844"/>
        <dbReference type="ChEBI" id="CHEBI:59789"/>
        <dbReference type="ChEBI" id="CHEBI:64428"/>
        <dbReference type="ChEBI" id="CHEBI:149473"/>
        <dbReference type="EC" id="2.8.1.6"/>
    </reaction>
</comment>
<comment type="cofactor">
    <cofactor evidence="1">
        <name>[4Fe-4S] cluster</name>
        <dbReference type="ChEBI" id="CHEBI:49883"/>
    </cofactor>
    <text evidence="1">Binds 1 [4Fe-4S] cluster. The cluster is coordinated with 3 cysteines and an exchangeable S-adenosyl-L-methionine.</text>
</comment>
<comment type="cofactor">
    <cofactor evidence="1">
        <name>[2Fe-2S] cluster</name>
        <dbReference type="ChEBI" id="CHEBI:190135"/>
    </cofactor>
    <text evidence="1">Binds 1 [2Fe-2S] cluster. The cluster is coordinated with 3 cysteines and 1 arginine.</text>
</comment>
<comment type="pathway">
    <text evidence="1">Cofactor biosynthesis; biotin biosynthesis; biotin from 7,8-diaminononanoate: step 2/2.</text>
</comment>
<comment type="subunit">
    <text evidence="1">Homodimer.</text>
</comment>
<comment type="similarity">
    <text evidence="1">Belongs to the radical SAM superfamily. Biotin synthase family.</text>
</comment>
<evidence type="ECO:0000255" key="1">
    <source>
        <dbReference type="HAMAP-Rule" id="MF_01694"/>
    </source>
</evidence>
<evidence type="ECO:0000255" key="2">
    <source>
        <dbReference type="PROSITE-ProRule" id="PRU01266"/>
    </source>
</evidence>
<reference key="1">
    <citation type="submission" date="2008-02" db="EMBL/GenBank/DDBJ databases">
        <title>Complete sequence of Escherichia coli C str. ATCC 8739.</title>
        <authorList>
            <person name="Copeland A."/>
            <person name="Lucas S."/>
            <person name="Lapidus A."/>
            <person name="Glavina del Rio T."/>
            <person name="Dalin E."/>
            <person name="Tice H."/>
            <person name="Bruce D."/>
            <person name="Goodwin L."/>
            <person name="Pitluck S."/>
            <person name="Kiss H."/>
            <person name="Brettin T."/>
            <person name="Detter J.C."/>
            <person name="Han C."/>
            <person name="Kuske C.R."/>
            <person name="Schmutz J."/>
            <person name="Larimer F."/>
            <person name="Land M."/>
            <person name="Hauser L."/>
            <person name="Kyrpides N."/>
            <person name="Mikhailova N."/>
            <person name="Ingram L."/>
            <person name="Richardson P."/>
        </authorList>
    </citation>
    <scope>NUCLEOTIDE SEQUENCE [LARGE SCALE GENOMIC DNA]</scope>
    <source>
        <strain>ATCC 8739 / DSM 1576 / NBRC 3972 / NCIMB 8545 / WDCM 00012 / Crooks</strain>
    </source>
</reference>